<proteinExistence type="inferred from homology"/>
<keyword id="KW-0963">Cytoplasm</keyword>
<keyword id="KW-0396">Initiation factor</keyword>
<keyword id="KW-0648">Protein biosynthesis</keyword>
<keyword id="KW-1185">Reference proteome</keyword>
<keyword id="KW-0694">RNA-binding</keyword>
<keyword id="KW-0699">rRNA-binding</keyword>
<sequence>MAKEDAIELQGTVLDTLPNTMFRVELENGHVVTAHISGKMRKNYIRILTGDKVTVEMTPYDLSKGRIVFRAR</sequence>
<gene>
    <name evidence="1" type="primary">infA</name>
    <name type="ordered locus">VF_1764</name>
</gene>
<organism>
    <name type="scientific">Aliivibrio fischeri (strain ATCC 700601 / ES114)</name>
    <name type="common">Vibrio fischeri</name>
    <dbReference type="NCBI Taxonomy" id="312309"/>
    <lineage>
        <taxon>Bacteria</taxon>
        <taxon>Pseudomonadati</taxon>
        <taxon>Pseudomonadota</taxon>
        <taxon>Gammaproteobacteria</taxon>
        <taxon>Vibrionales</taxon>
        <taxon>Vibrionaceae</taxon>
        <taxon>Aliivibrio</taxon>
    </lineage>
</organism>
<dbReference type="EMBL" id="CP000020">
    <property type="protein sequence ID" value="AAW86259.1"/>
    <property type="molecule type" value="Genomic_DNA"/>
</dbReference>
<dbReference type="RefSeq" id="WP_005420180.1">
    <property type="nucleotide sequence ID" value="NZ_CAWLES010000001.1"/>
</dbReference>
<dbReference type="RefSeq" id="YP_205147.1">
    <property type="nucleotide sequence ID" value="NC_006840.2"/>
</dbReference>
<dbReference type="SMR" id="Q5E3Y7"/>
<dbReference type="STRING" id="312309.VF_1764"/>
<dbReference type="EnsemblBacteria" id="AAW86259">
    <property type="protein sequence ID" value="AAW86259"/>
    <property type="gene ID" value="VF_1764"/>
</dbReference>
<dbReference type="GeneID" id="56273624"/>
<dbReference type="KEGG" id="vfi:VF_1764"/>
<dbReference type="PATRIC" id="fig|312309.11.peg.1790"/>
<dbReference type="eggNOG" id="COG0361">
    <property type="taxonomic scope" value="Bacteria"/>
</dbReference>
<dbReference type="HOGENOM" id="CLU_151267_1_0_6"/>
<dbReference type="OrthoDB" id="9803250at2"/>
<dbReference type="PRO" id="PR:Q5E3Y7"/>
<dbReference type="Proteomes" id="UP000000537">
    <property type="component" value="Chromosome I"/>
</dbReference>
<dbReference type="GO" id="GO:0005829">
    <property type="term" value="C:cytosol"/>
    <property type="evidence" value="ECO:0007669"/>
    <property type="project" value="TreeGrafter"/>
</dbReference>
<dbReference type="GO" id="GO:0043022">
    <property type="term" value="F:ribosome binding"/>
    <property type="evidence" value="ECO:0007669"/>
    <property type="project" value="UniProtKB-UniRule"/>
</dbReference>
<dbReference type="GO" id="GO:0019843">
    <property type="term" value="F:rRNA binding"/>
    <property type="evidence" value="ECO:0007669"/>
    <property type="project" value="UniProtKB-UniRule"/>
</dbReference>
<dbReference type="GO" id="GO:0003743">
    <property type="term" value="F:translation initiation factor activity"/>
    <property type="evidence" value="ECO:0007669"/>
    <property type="project" value="UniProtKB-UniRule"/>
</dbReference>
<dbReference type="CDD" id="cd04451">
    <property type="entry name" value="S1_IF1"/>
    <property type="match status" value="1"/>
</dbReference>
<dbReference type="FunFam" id="2.40.50.140:FF:000002">
    <property type="entry name" value="Translation initiation factor IF-1"/>
    <property type="match status" value="1"/>
</dbReference>
<dbReference type="Gene3D" id="2.40.50.140">
    <property type="entry name" value="Nucleic acid-binding proteins"/>
    <property type="match status" value="1"/>
</dbReference>
<dbReference type="HAMAP" id="MF_00075">
    <property type="entry name" value="IF_1"/>
    <property type="match status" value="1"/>
</dbReference>
<dbReference type="InterPro" id="IPR012340">
    <property type="entry name" value="NA-bd_OB-fold"/>
</dbReference>
<dbReference type="InterPro" id="IPR006196">
    <property type="entry name" value="RNA-binding_domain_S1_IF1"/>
</dbReference>
<dbReference type="InterPro" id="IPR003029">
    <property type="entry name" value="S1_domain"/>
</dbReference>
<dbReference type="InterPro" id="IPR004368">
    <property type="entry name" value="TIF_IF1"/>
</dbReference>
<dbReference type="NCBIfam" id="TIGR00008">
    <property type="entry name" value="infA"/>
    <property type="match status" value="1"/>
</dbReference>
<dbReference type="PANTHER" id="PTHR33370">
    <property type="entry name" value="TRANSLATION INITIATION FACTOR IF-1, CHLOROPLASTIC"/>
    <property type="match status" value="1"/>
</dbReference>
<dbReference type="PANTHER" id="PTHR33370:SF1">
    <property type="entry name" value="TRANSLATION INITIATION FACTOR IF-1, CHLOROPLASTIC"/>
    <property type="match status" value="1"/>
</dbReference>
<dbReference type="Pfam" id="PF01176">
    <property type="entry name" value="eIF-1a"/>
    <property type="match status" value="1"/>
</dbReference>
<dbReference type="SMART" id="SM00316">
    <property type="entry name" value="S1"/>
    <property type="match status" value="1"/>
</dbReference>
<dbReference type="SUPFAM" id="SSF50249">
    <property type="entry name" value="Nucleic acid-binding proteins"/>
    <property type="match status" value="1"/>
</dbReference>
<dbReference type="PROSITE" id="PS50832">
    <property type="entry name" value="S1_IF1_TYPE"/>
    <property type="match status" value="1"/>
</dbReference>
<name>IF1_ALIF1</name>
<reference key="1">
    <citation type="journal article" date="2005" name="Proc. Natl. Acad. Sci. U.S.A.">
        <title>Complete genome sequence of Vibrio fischeri: a symbiotic bacterium with pathogenic congeners.</title>
        <authorList>
            <person name="Ruby E.G."/>
            <person name="Urbanowski M."/>
            <person name="Campbell J."/>
            <person name="Dunn A."/>
            <person name="Faini M."/>
            <person name="Gunsalus R."/>
            <person name="Lostroh P."/>
            <person name="Lupp C."/>
            <person name="McCann J."/>
            <person name="Millikan D."/>
            <person name="Schaefer A."/>
            <person name="Stabb E."/>
            <person name="Stevens A."/>
            <person name="Visick K."/>
            <person name="Whistler C."/>
            <person name="Greenberg E.P."/>
        </authorList>
    </citation>
    <scope>NUCLEOTIDE SEQUENCE [LARGE SCALE GENOMIC DNA]</scope>
    <source>
        <strain>ATCC 700601 / ES114</strain>
    </source>
</reference>
<protein>
    <recommendedName>
        <fullName evidence="1">Translation initiation factor IF-1</fullName>
    </recommendedName>
</protein>
<evidence type="ECO:0000255" key="1">
    <source>
        <dbReference type="HAMAP-Rule" id="MF_00075"/>
    </source>
</evidence>
<feature type="chain" id="PRO_0000095902" description="Translation initiation factor IF-1">
    <location>
        <begin position="1"/>
        <end position="72"/>
    </location>
</feature>
<feature type="domain" description="S1-like" evidence="1">
    <location>
        <begin position="1"/>
        <end position="72"/>
    </location>
</feature>
<accession>Q5E3Y7</accession>
<comment type="function">
    <text evidence="1">One of the essential components for the initiation of protein synthesis. Stabilizes the binding of IF-2 and IF-3 on the 30S subunit to which N-formylmethionyl-tRNA(fMet) subsequently binds. Helps modulate mRNA selection, yielding the 30S pre-initiation complex (PIC). Upon addition of the 50S ribosomal subunit IF-1, IF-2 and IF-3 are released leaving the mature 70S translation initiation complex.</text>
</comment>
<comment type="subunit">
    <text evidence="1">Component of the 30S ribosomal translation pre-initiation complex which assembles on the 30S ribosome in the order IF-2 and IF-3, IF-1 and N-formylmethionyl-tRNA(fMet); mRNA recruitment can occur at any time during PIC assembly.</text>
</comment>
<comment type="subcellular location">
    <subcellularLocation>
        <location evidence="1">Cytoplasm</location>
    </subcellularLocation>
</comment>
<comment type="similarity">
    <text evidence="1">Belongs to the IF-1 family.</text>
</comment>